<feature type="chain" id="PRO_0000078618" description="Chaperone protein HscA homolog">
    <location>
        <begin position="1"/>
        <end position="620"/>
    </location>
</feature>
<dbReference type="EMBL" id="BX640416">
    <property type="protein sequence ID" value="CAE42089.1"/>
    <property type="molecule type" value="Genomic_DNA"/>
</dbReference>
<dbReference type="RefSeq" id="NP_880509.1">
    <property type="nucleotide sequence ID" value="NC_002929.2"/>
</dbReference>
<dbReference type="RefSeq" id="WP_010930571.1">
    <property type="nucleotide sequence ID" value="NZ_CP039022.1"/>
</dbReference>
<dbReference type="SMR" id="Q7VXG7"/>
<dbReference type="STRING" id="257313.BP1803"/>
<dbReference type="PaxDb" id="257313-BP1803"/>
<dbReference type="GeneID" id="69602020"/>
<dbReference type="KEGG" id="bpe:BP1803"/>
<dbReference type="PATRIC" id="fig|257313.5.peg.1936"/>
<dbReference type="eggNOG" id="COG0443">
    <property type="taxonomic scope" value="Bacteria"/>
</dbReference>
<dbReference type="HOGENOM" id="CLU_005965_2_3_4"/>
<dbReference type="Proteomes" id="UP000002676">
    <property type="component" value="Chromosome"/>
</dbReference>
<dbReference type="GO" id="GO:0005524">
    <property type="term" value="F:ATP binding"/>
    <property type="evidence" value="ECO:0007669"/>
    <property type="project" value="UniProtKB-KW"/>
</dbReference>
<dbReference type="GO" id="GO:0016887">
    <property type="term" value="F:ATP hydrolysis activity"/>
    <property type="evidence" value="ECO:0007669"/>
    <property type="project" value="UniProtKB-UniRule"/>
</dbReference>
<dbReference type="GO" id="GO:0140662">
    <property type="term" value="F:ATP-dependent protein folding chaperone"/>
    <property type="evidence" value="ECO:0007669"/>
    <property type="project" value="InterPro"/>
</dbReference>
<dbReference type="GO" id="GO:0051082">
    <property type="term" value="F:unfolded protein binding"/>
    <property type="evidence" value="ECO:0007669"/>
    <property type="project" value="InterPro"/>
</dbReference>
<dbReference type="GO" id="GO:0016226">
    <property type="term" value="P:iron-sulfur cluster assembly"/>
    <property type="evidence" value="ECO:0007669"/>
    <property type="project" value="InterPro"/>
</dbReference>
<dbReference type="FunFam" id="3.30.420.40:FF:000046">
    <property type="entry name" value="Chaperone protein HscA"/>
    <property type="match status" value="1"/>
</dbReference>
<dbReference type="FunFam" id="2.60.34.10:FF:000005">
    <property type="entry name" value="Chaperone protein HscA homolog"/>
    <property type="match status" value="1"/>
</dbReference>
<dbReference type="Gene3D" id="1.20.1270.10">
    <property type="match status" value="1"/>
</dbReference>
<dbReference type="Gene3D" id="3.30.420.40">
    <property type="match status" value="2"/>
</dbReference>
<dbReference type="Gene3D" id="3.90.640.10">
    <property type="entry name" value="Actin, Chain A, domain 4"/>
    <property type="match status" value="1"/>
</dbReference>
<dbReference type="Gene3D" id="2.60.34.10">
    <property type="entry name" value="Substrate Binding Domain Of DNAk, Chain A, domain 1"/>
    <property type="match status" value="1"/>
</dbReference>
<dbReference type="HAMAP" id="MF_00679">
    <property type="entry name" value="HscA"/>
    <property type="match status" value="1"/>
</dbReference>
<dbReference type="InterPro" id="IPR043129">
    <property type="entry name" value="ATPase_NBD"/>
</dbReference>
<dbReference type="InterPro" id="IPR018181">
    <property type="entry name" value="Heat_shock_70_CS"/>
</dbReference>
<dbReference type="InterPro" id="IPR029048">
    <property type="entry name" value="HSP70_C_sf"/>
</dbReference>
<dbReference type="InterPro" id="IPR029047">
    <property type="entry name" value="HSP70_peptide-bd_sf"/>
</dbReference>
<dbReference type="InterPro" id="IPR013126">
    <property type="entry name" value="Hsp_70_fam"/>
</dbReference>
<dbReference type="InterPro" id="IPR010236">
    <property type="entry name" value="ISC_FeS_clus_asmbl_HscA"/>
</dbReference>
<dbReference type="NCBIfam" id="TIGR01991">
    <property type="entry name" value="HscA"/>
    <property type="match status" value="1"/>
</dbReference>
<dbReference type="NCBIfam" id="NF003520">
    <property type="entry name" value="PRK05183.1"/>
    <property type="match status" value="1"/>
</dbReference>
<dbReference type="PANTHER" id="PTHR19375">
    <property type="entry name" value="HEAT SHOCK PROTEIN 70KDA"/>
    <property type="match status" value="1"/>
</dbReference>
<dbReference type="Pfam" id="PF00012">
    <property type="entry name" value="HSP70"/>
    <property type="match status" value="1"/>
</dbReference>
<dbReference type="PRINTS" id="PR00301">
    <property type="entry name" value="HEATSHOCK70"/>
</dbReference>
<dbReference type="SUPFAM" id="SSF53067">
    <property type="entry name" value="Actin-like ATPase domain"/>
    <property type="match status" value="2"/>
</dbReference>
<dbReference type="SUPFAM" id="SSF100934">
    <property type="entry name" value="Heat shock protein 70kD (HSP70), C-terminal subdomain"/>
    <property type="match status" value="1"/>
</dbReference>
<dbReference type="SUPFAM" id="SSF100920">
    <property type="entry name" value="Heat shock protein 70kD (HSP70), peptide-binding domain"/>
    <property type="match status" value="1"/>
</dbReference>
<dbReference type="PROSITE" id="PS00297">
    <property type="entry name" value="HSP70_1"/>
    <property type="match status" value="1"/>
</dbReference>
<dbReference type="PROSITE" id="PS00329">
    <property type="entry name" value="HSP70_2"/>
    <property type="match status" value="1"/>
</dbReference>
<dbReference type="PROSITE" id="PS01036">
    <property type="entry name" value="HSP70_3"/>
    <property type="match status" value="1"/>
</dbReference>
<organism>
    <name type="scientific">Bordetella pertussis (strain Tohama I / ATCC BAA-589 / NCTC 13251)</name>
    <dbReference type="NCBI Taxonomy" id="257313"/>
    <lineage>
        <taxon>Bacteria</taxon>
        <taxon>Pseudomonadati</taxon>
        <taxon>Pseudomonadota</taxon>
        <taxon>Betaproteobacteria</taxon>
        <taxon>Burkholderiales</taxon>
        <taxon>Alcaligenaceae</taxon>
        <taxon>Bordetella</taxon>
    </lineage>
</organism>
<sequence length="620" mass="65260">MALLQISEPGDSPAPHQRKLAVGIDLGTTNSLVAAVRSSVPEVLADAQGQVLLPSAVRYLDGGAVRIGREALLEQARDPLNTIVSVKRFMGRSAADAAASGAPYEFVDAPGMVRLRTVQGDLSPVEVSAQILAVLRQRAEDVLGDDLVGAVITVPAYFDDAQRQATRDAARLAGLNVLRLLNEPTAAAIAYGLDQAAEGIYAVYDLGGGTFDISILRLTQGVFEVIATGGDTALGGDDFDSAIVAHACAGEDVAALPVADRRALLVAARAAREALTDQAQAPFEVTLRDGRAIQATLTRAQFEQLAEPLVGRTLDSARRALRDAGLAVGDVRGVVMVGGATRMPVVRQQVGALFGTEPLTNLDPDQVVALGAALQANLLAGNRALGEDWLLLDVIPLSLGLETMGGLVERIIPRNSTIPVARAQEFTTFKDGQTAMSVHVVQGERDLVSDCRSLARFELRGIPPMVAGAARIRVTFQVDADGLLSVTAREQSTGVEAAVAVKPSYGLSDDEIARMLADSVTQADSDARARMLREQQVEARQLVESVGAALAADGDLLDPAERATVDQRLQAAAQAQSLDDVEAVRAAVQALSDATEEFAARRMDRSIRSALAGRKLDELA</sequence>
<gene>
    <name evidence="1" type="primary">hscA</name>
    <name type="ordered locus">BP1803</name>
</gene>
<proteinExistence type="inferred from homology"/>
<accession>Q7VXG7</accession>
<name>HSCA_BORPE</name>
<keyword id="KW-0067">ATP-binding</keyword>
<keyword id="KW-0143">Chaperone</keyword>
<keyword id="KW-0547">Nucleotide-binding</keyword>
<keyword id="KW-1185">Reference proteome</keyword>
<comment type="function">
    <text evidence="1">Chaperone involved in the maturation of iron-sulfur cluster-containing proteins. Has a low intrinsic ATPase activity which is markedly stimulated by HscB.</text>
</comment>
<comment type="similarity">
    <text evidence="1">Belongs to the heat shock protein 70 family.</text>
</comment>
<evidence type="ECO:0000255" key="1">
    <source>
        <dbReference type="HAMAP-Rule" id="MF_00679"/>
    </source>
</evidence>
<reference key="1">
    <citation type="journal article" date="2003" name="Nat. Genet.">
        <title>Comparative analysis of the genome sequences of Bordetella pertussis, Bordetella parapertussis and Bordetella bronchiseptica.</title>
        <authorList>
            <person name="Parkhill J."/>
            <person name="Sebaihia M."/>
            <person name="Preston A."/>
            <person name="Murphy L.D."/>
            <person name="Thomson N.R."/>
            <person name="Harris D.E."/>
            <person name="Holden M.T.G."/>
            <person name="Churcher C.M."/>
            <person name="Bentley S.D."/>
            <person name="Mungall K.L."/>
            <person name="Cerdeno-Tarraga A.-M."/>
            <person name="Temple L."/>
            <person name="James K.D."/>
            <person name="Harris B."/>
            <person name="Quail M.A."/>
            <person name="Achtman M."/>
            <person name="Atkin R."/>
            <person name="Baker S."/>
            <person name="Basham D."/>
            <person name="Bason N."/>
            <person name="Cherevach I."/>
            <person name="Chillingworth T."/>
            <person name="Collins M."/>
            <person name="Cronin A."/>
            <person name="Davis P."/>
            <person name="Doggett J."/>
            <person name="Feltwell T."/>
            <person name="Goble A."/>
            <person name="Hamlin N."/>
            <person name="Hauser H."/>
            <person name="Holroyd S."/>
            <person name="Jagels K."/>
            <person name="Leather S."/>
            <person name="Moule S."/>
            <person name="Norberczak H."/>
            <person name="O'Neil S."/>
            <person name="Ormond D."/>
            <person name="Price C."/>
            <person name="Rabbinowitsch E."/>
            <person name="Rutter S."/>
            <person name="Sanders M."/>
            <person name="Saunders D."/>
            <person name="Seeger K."/>
            <person name="Sharp S."/>
            <person name="Simmonds M."/>
            <person name="Skelton J."/>
            <person name="Squares R."/>
            <person name="Squares S."/>
            <person name="Stevens K."/>
            <person name="Unwin L."/>
            <person name="Whitehead S."/>
            <person name="Barrell B.G."/>
            <person name="Maskell D.J."/>
        </authorList>
    </citation>
    <scope>NUCLEOTIDE SEQUENCE [LARGE SCALE GENOMIC DNA]</scope>
    <source>
        <strain>Tohama I / ATCC BAA-589 / NCTC 13251</strain>
    </source>
</reference>
<protein>
    <recommendedName>
        <fullName evidence="1">Chaperone protein HscA homolog</fullName>
    </recommendedName>
</protein>